<organism>
    <name type="scientific">Vibrio vulnificus (strain CMCP6)</name>
    <dbReference type="NCBI Taxonomy" id="216895"/>
    <lineage>
        <taxon>Bacteria</taxon>
        <taxon>Pseudomonadati</taxon>
        <taxon>Pseudomonadota</taxon>
        <taxon>Gammaproteobacteria</taxon>
        <taxon>Vibrionales</taxon>
        <taxon>Vibrionaceae</taxon>
        <taxon>Vibrio</taxon>
    </lineage>
</organism>
<dbReference type="EMBL" id="AE016795">
    <property type="protein sequence ID" value="AAO10039.1"/>
    <property type="molecule type" value="Genomic_DNA"/>
</dbReference>
<dbReference type="RefSeq" id="WP_011079546.1">
    <property type="nucleotide sequence ID" value="NC_004459.3"/>
</dbReference>
<dbReference type="SMR" id="P67695"/>
<dbReference type="KEGG" id="vvu:VV1_1620"/>
<dbReference type="HOGENOM" id="CLU_076303_0_0_6"/>
<dbReference type="Proteomes" id="UP000002275">
    <property type="component" value="Chromosome 1"/>
</dbReference>
<dbReference type="GO" id="GO:0032153">
    <property type="term" value="C:cell division site"/>
    <property type="evidence" value="ECO:0007669"/>
    <property type="project" value="TreeGrafter"/>
</dbReference>
<dbReference type="GO" id="GO:0005737">
    <property type="term" value="C:cytoplasm"/>
    <property type="evidence" value="ECO:0007669"/>
    <property type="project" value="UniProtKB-SubCell"/>
</dbReference>
<dbReference type="GO" id="GO:0000917">
    <property type="term" value="P:division septum assembly"/>
    <property type="evidence" value="ECO:0007669"/>
    <property type="project" value="UniProtKB-KW"/>
</dbReference>
<dbReference type="GO" id="GO:0043093">
    <property type="term" value="P:FtsZ-dependent cytokinesis"/>
    <property type="evidence" value="ECO:0007669"/>
    <property type="project" value="UniProtKB-UniRule"/>
</dbReference>
<dbReference type="Gene3D" id="1.10.3900.10">
    <property type="entry name" value="YacF-like"/>
    <property type="match status" value="1"/>
</dbReference>
<dbReference type="Gene3D" id="2.60.440.10">
    <property type="entry name" value="YacF-like domains"/>
    <property type="match status" value="1"/>
</dbReference>
<dbReference type="HAMAP" id="MF_01092">
    <property type="entry name" value="ZapD"/>
    <property type="match status" value="1"/>
</dbReference>
<dbReference type="InterPro" id="IPR009777">
    <property type="entry name" value="ZapD"/>
</dbReference>
<dbReference type="InterPro" id="IPR027462">
    <property type="entry name" value="ZapD_C"/>
</dbReference>
<dbReference type="InterPro" id="IPR036268">
    <property type="entry name" value="ZapD_sf"/>
</dbReference>
<dbReference type="NCBIfam" id="NF003655">
    <property type="entry name" value="PRK05287.1-3"/>
    <property type="match status" value="1"/>
</dbReference>
<dbReference type="PANTHER" id="PTHR39455">
    <property type="entry name" value="CELL DIVISION PROTEIN ZAPD"/>
    <property type="match status" value="1"/>
</dbReference>
<dbReference type="PANTHER" id="PTHR39455:SF1">
    <property type="entry name" value="CELL DIVISION PROTEIN ZAPD"/>
    <property type="match status" value="1"/>
</dbReference>
<dbReference type="Pfam" id="PF07072">
    <property type="entry name" value="ZapD"/>
    <property type="match status" value="1"/>
</dbReference>
<dbReference type="SUPFAM" id="SSF160950">
    <property type="entry name" value="YacF-like"/>
    <property type="match status" value="1"/>
</dbReference>
<comment type="function">
    <text evidence="1">Cell division factor that enhances FtsZ-ring assembly. Directly interacts with FtsZ and promotes bundling of FtsZ protofilaments, with a reduction in FtsZ GTPase activity.</text>
</comment>
<comment type="subunit">
    <text evidence="1">Interacts with FtsZ.</text>
</comment>
<comment type="subcellular location">
    <subcellularLocation>
        <location evidence="1">Cytoplasm</location>
    </subcellularLocation>
    <text evidence="1">Localizes to mid-cell in an FtsZ-dependent manner.</text>
</comment>
<comment type="similarity">
    <text evidence="1">Belongs to the ZapD family.</text>
</comment>
<feature type="chain" id="PRO_0000211685" description="Cell division protein ZapD">
    <location>
        <begin position="1"/>
        <end position="246"/>
    </location>
</feature>
<name>ZAPD_VIBVU</name>
<accession>P67695</accession>
<accession>Q8DC29</accession>
<proteinExistence type="inferred from homology"/>
<reference key="1">
    <citation type="submission" date="2002-12" db="EMBL/GenBank/DDBJ databases">
        <title>Complete genome sequence of Vibrio vulnificus CMCP6.</title>
        <authorList>
            <person name="Rhee J.H."/>
            <person name="Kim S.Y."/>
            <person name="Chung S.S."/>
            <person name="Kim J.J."/>
            <person name="Moon Y.H."/>
            <person name="Jeong H."/>
            <person name="Choy H.E."/>
        </authorList>
    </citation>
    <scope>NUCLEOTIDE SEQUENCE [LARGE SCALE GENOMIC DNA]</scope>
    <source>
        <strain>CMCP6</strain>
    </source>
</reference>
<keyword id="KW-0131">Cell cycle</keyword>
<keyword id="KW-0132">Cell division</keyword>
<keyword id="KW-0963">Cytoplasm</keyword>
<keyword id="KW-0717">Septation</keyword>
<protein>
    <recommendedName>
        <fullName evidence="1">Cell division protein ZapD</fullName>
    </recommendedName>
    <alternativeName>
        <fullName evidence="1">Z ring-associated protein D</fullName>
    </alternativeName>
</protein>
<sequence length="246" mass="28589">MTTHNFEHPLNEKTRIYLRVESLLRQAHTAASFSEPHQHQLFFRSIFDLIEIFEQIQLKSELAKDIEKQRLLYRSWLNVEGVDQATLRSLLDEADRTHAALMQAPRFGQSLKEDRFLSSIRQRFSLPGGSCCFDLPALHYWLNLPIERKIEDARQWLDSLKPLSDALNLWLKLAREAGHFRSQTALNGFFQSDAEEANILRLHIPMEYGVYPMISGHKNRFAIKFINFETGQACSQDVHFELAVCS</sequence>
<evidence type="ECO:0000255" key="1">
    <source>
        <dbReference type="HAMAP-Rule" id="MF_01092"/>
    </source>
</evidence>
<gene>
    <name evidence="1" type="primary">zapD</name>
    <name type="ordered locus">VV1_1620</name>
</gene>